<evidence type="ECO:0000255" key="1">
    <source>
        <dbReference type="HAMAP-Rule" id="MF_01589"/>
    </source>
</evidence>
<keyword id="KW-1185">Reference proteome</keyword>
<keyword id="KW-0949">S-adenosyl-L-methionine</keyword>
<keyword id="KW-0808">Transferase</keyword>
<feature type="chain" id="PRO_0000314389" description="Carboxy-S-adenosyl-L-methionine synthase">
    <location>
        <begin position="1"/>
        <end position="247"/>
    </location>
</feature>
<feature type="binding site" evidence="1">
    <location>
        <position position="39"/>
    </location>
    <ligand>
        <name>S-adenosyl-L-methionine</name>
        <dbReference type="ChEBI" id="CHEBI:59789"/>
    </ligand>
</feature>
<feature type="binding site" evidence="1">
    <location>
        <begin position="64"/>
        <end position="66"/>
    </location>
    <ligand>
        <name>S-adenosyl-L-methionine</name>
        <dbReference type="ChEBI" id="CHEBI:59789"/>
    </ligand>
</feature>
<feature type="binding site" evidence="1">
    <location>
        <begin position="89"/>
        <end position="90"/>
    </location>
    <ligand>
        <name>S-adenosyl-L-methionine</name>
        <dbReference type="ChEBI" id="CHEBI:59789"/>
    </ligand>
</feature>
<feature type="binding site" evidence="1">
    <location>
        <begin position="117"/>
        <end position="118"/>
    </location>
    <ligand>
        <name>S-adenosyl-L-methionine</name>
        <dbReference type="ChEBI" id="CHEBI:59789"/>
    </ligand>
</feature>
<feature type="binding site" evidence="1">
    <location>
        <position position="132"/>
    </location>
    <ligand>
        <name>S-adenosyl-L-methionine</name>
        <dbReference type="ChEBI" id="CHEBI:59789"/>
    </ligand>
</feature>
<feature type="binding site" evidence="1">
    <location>
        <position position="199"/>
    </location>
    <ligand>
        <name>S-adenosyl-L-methionine</name>
        <dbReference type="ChEBI" id="CHEBI:59789"/>
    </ligand>
</feature>
<accession>Q83KQ5</accession>
<accession>Q7C189</accession>
<sequence length="247" mass="27791">MSHRDTLFSAPIARLGDWTFDERVAEVFPDMIQRSVPGYSNIISMIGMLAERFVQPGTQVYDLGCSLGAATLSVRRNIHHDNCKIIAIDNSPAMIERCRRHIDAYKAPTPVDVIEGDIRDIAIENASMVVLNFTLQFLEPSERQALLDKIYQGLNPGGALVLSEKFSFEDAKVGELLFNMHHDFKRANGYSELEISQKRSMLENVMLTDSVETHKARLHKAGFEHSELWFQCFNFGSLVALKAEDAA</sequence>
<organism>
    <name type="scientific">Shigella flexneri</name>
    <dbReference type="NCBI Taxonomy" id="623"/>
    <lineage>
        <taxon>Bacteria</taxon>
        <taxon>Pseudomonadati</taxon>
        <taxon>Pseudomonadota</taxon>
        <taxon>Gammaproteobacteria</taxon>
        <taxon>Enterobacterales</taxon>
        <taxon>Enterobacteriaceae</taxon>
        <taxon>Shigella</taxon>
    </lineage>
</organism>
<gene>
    <name evidence="1" type="primary">cmoA</name>
    <name type="ordered locus">SF1911</name>
    <name type="ordered locus">S2001</name>
</gene>
<comment type="function">
    <text evidence="1">Catalyzes the conversion of S-adenosyl-L-methionine (SAM) to carboxy-S-adenosyl-L-methionine (Cx-SAM).</text>
</comment>
<comment type="catalytic activity">
    <reaction evidence="1">
        <text>prephenate + S-adenosyl-L-methionine = carboxy-S-adenosyl-L-methionine + 3-phenylpyruvate + H2O</text>
        <dbReference type="Rhea" id="RHEA:51692"/>
        <dbReference type="ChEBI" id="CHEBI:15377"/>
        <dbReference type="ChEBI" id="CHEBI:18005"/>
        <dbReference type="ChEBI" id="CHEBI:29934"/>
        <dbReference type="ChEBI" id="CHEBI:59789"/>
        <dbReference type="ChEBI" id="CHEBI:134278"/>
    </reaction>
</comment>
<comment type="subunit">
    <text evidence="1">Homodimer.</text>
</comment>
<comment type="similarity">
    <text evidence="1">Belongs to the class I-like SAM-binding methyltransferase superfamily. Cx-SAM synthase family.</text>
</comment>
<dbReference type="EC" id="2.1.3.-" evidence="1"/>
<dbReference type="EMBL" id="AE005674">
    <property type="protein sequence ID" value="AAN43465.1"/>
    <property type="molecule type" value="Genomic_DNA"/>
</dbReference>
<dbReference type="EMBL" id="AE014073">
    <property type="protein sequence ID" value="AAP17298.1"/>
    <property type="molecule type" value="Genomic_DNA"/>
</dbReference>
<dbReference type="RefSeq" id="WP_000019588.1">
    <property type="nucleotide sequence ID" value="NZ_WPGW01000115.1"/>
</dbReference>
<dbReference type="SMR" id="Q83KQ5"/>
<dbReference type="STRING" id="198214.SF1911"/>
<dbReference type="PaxDb" id="198214-SF1911"/>
<dbReference type="GeneID" id="75202724"/>
<dbReference type="KEGG" id="sfl:SF1911"/>
<dbReference type="KEGG" id="sfx:S2001"/>
<dbReference type="PATRIC" id="fig|198214.7.peg.2281"/>
<dbReference type="HOGENOM" id="CLU_078475_0_0_6"/>
<dbReference type="Proteomes" id="UP000001006">
    <property type="component" value="Chromosome"/>
</dbReference>
<dbReference type="Proteomes" id="UP000002673">
    <property type="component" value="Chromosome"/>
</dbReference>
<dbReference type="GO" id="GO:0016743">
    <property type="term" value="F:carboxyl- or carbamoyltransferase activity"/>
    <property type="evidence" value="ECO:0007669"/>
    <property type="project" value="UniProtKB-UniRule"/>
</dbReference>
<dbReference type="GO" id="GO:1904047">
    <property type="term" value="F:S-adenosyl-L-methionine binding"/>
    <property type="evidence" value="ECO:0007669"/>
    <property type="project" value="UniProtKB-UniRule"/>
</dbReference>
<dbReference type="GO" id="GO:0002098">
    <property type="term" value="P:tRNA wobble uridine modification"/>
    <property type="evidence" value="ECO:0007669"/>
    <property type="project" value="InterPro"/>
</dbReference>
<dbReference type="CDD" id="cd02440">
    <property type="entry name" value="AdoMet_MTases"/>
    <property type="match status" value="1"/>
</dbReference>
<dbReference type="FunFam" id="3.40.50.150:FF:000030">
    <property type="entry name" value="Carboxy-S-adenosyl-L-methionine synthase"/>
    <property type="match status" value="1"/>
</dbReference>
<dbReference type="Gene3D" id="3.40.50.150">
    <property type="entry name" value="Vaccinia Virus protein VP39"/>
    <property type="match status" value="1"/>
</dbReference>
<dbReference type="HAMAP" id="MF_01589">
    <property type="entry name" value="Cx_SAM_synthase"/>
    <property type="match status" value="1"/>
</dbReference>
<dbReference type="InterPro" id="IPR005271">
    <property type="entry name" value="CmoA"/>
</dbReference>
<dbReference type="InterPro" id="IPR041698">
    <property type="entry name" value="Methyltransf_25"/>
</dbReference>
<dbReference type="InterPro" id="IPR029063">
    <property type="entry name" value="SAM-dependent_MTases_sf"/>
</dbReference>
<dbReference type="NCBIfam" id="TIGR00740">
    <property type="entry name" value="carboxy-S-adenosyl-L-methionine synthase CmoA"/>
    <property type="match status" value="1"/>
</dbReference>
<dbReference type="NCBIfam" id="NF011995">
    <property type="entry name" value="PRK15451.1"/>
    <property type="match status" value="1"/>
</dbReference>
<dbReference type="PANTHER" id="PTHR43861:SF2">
    <property type="entry name" value="CARBOXY-S-ADENOSYL-L-METHIONINE SYNTHASE"/>
    <property type="match status" value="1"/>
</dbReference>
<dbReference type="PANTHER" id="PTHR43861">
    <property type="entry name" value="TRANS-ACONITATE 2-METHYLTRANSFERASE-RELATED"/>
    <property type="match status" value="1"/>
</dbReference>
<dbReference type="Pfam" id="PF13649">
    <property type="entry name" value="Methyltransf_25"/>
    <property type="match status" value="1"/>
</dbReference>
<dbReference type="PIRSF" id="PIRSF006325">
    <property type="entry name" value="MeTrfase_bac"/>
    <property type="match status" value="1"/>
</dbReference>
<dbReference type="SUPFAM" id="SSF53335">
    <property type="entry name" value="S-adenosyl-L-methionine-dependent methyltransferases"/>
    <property type="match status" value="1"/>
</dbReference>
<reference key="1">
    <citation type="journal article" date="2002" name="Nucleic Acids Res.">
        <title>Genome sequence of Shigella flexneri 2a: insights into pathogenicity through comparison with genomes of Escherichia coli K12 and O157.</title>
        <authorList>
            <person name="Jin Q."/>
            <person name="Yuan Z."/>
            <person name="Xu J."/>
            <person name="Wang Y."/>
            <person name="Shen Y."/>
            <person name="Lu W."/>
            <person name="Wang J."/>
            <person name="Liu H."/>
            <person name="Yang J."/>
            <person name="Yang F."/>
            <person name="Zhang X."/>
            <person name="Zhang J."/>
            <person name="Yang G."/>
            <person name="Wu H."/>
            <person name="Qu D."/>
            <person name="Dong J."/>
            <person name="Sun L."/>
            <person name="Xue Y."/>
            <person name="Zhao A."/>
            <person name="Gao Y."/>
            <person name="Zhu J."/>
            <person name="Kan B."/>
            <person name="Ding K."/>
            <person name="Chen S."/>
            <person name="Cheng H."/>
            <person name="Yao Z."/>
            <person name="He B."/>
            <person name="Chen R."/>
            <person name="Ma D."/>
            <person name="Qiang B."/>
            <person name="Wen Y."/>
            <person name="Hou Y."/>
            <person name="Yu J."/>
        </authorList>
    </citation>
    <scope>NUCLEOTIDE SEQUENCE [LARGE SCALE GENOMIC DNA]</scope>
    <source>
        <strain>301 / Serotype 2a</strain>
    </source>
</reference>
<reference key="2">
    <citation type="journal article" date="2003" name="Infect. Immun.">
        <title>Complete genome sequence and comparative genomics of Shigella flexneri serotype 2a strain 2457T.</title>
        <authorList>
            <person name="Wei J."/>
            <person name="Goldberg M.B."/>
            <person name="Burland V."/>
            <person name="Venkatesan M.M."/>
            <person name="Deng W."/>
            <person name="Fournier G."/>
            <person name="Mayhew G.F."/>
            <person name="Plunkett G. III"/>
            <person name="Rose D.J."/>
            <person name="Darling A."/>
            <person name="Mau B."/>
            <person name="Perna N.T."/>
            <person name="Payne S.M."/>
            <person name="Runyen-Janecky L.J."/>
            <person name="Zhou S."/>
            <person name="Schwartz D.C."/>
            <person name="Blattner F.R."/>
        </authorList>
    </citation>
    <scope>NUCLEOTIDE SEQUENCE [LARGE SCALE GENOMIC DNA]</scope>
    <source>
        <strain>ATCC 700930 / 2457T / Serotype 2a</strain>
    </source>
</reference>
<proteinExistence type="inferred from homology"/>
<protein>
    <recommendedName>
        <fullName evidence="1">Carboxy-S-adenosyl-L-methionine synthase</fullName>
        <shortName evidence="1">Cx-SAM synthase</shortName>
        <ecNumber evidence="1">2.1.3.-</ecNumber>
    </recommendedName>
</protein>
<name>CMOA_SHIFL</name>